<sequence length="209" mass="22771">MTLASQIATQLLDIKAVYLKPEDPFTWASGIKSPIYTDNRVTLSYPKTRDLIENGFVETIRAHFPEVEVIAGTATAGIPHGAIIADKMTLPFAYIRSKPKDHGAGNQIEGRVLKGQKMVIIEDLISTGGSVLDAAAAASREGADVLGVVAIFTYELPKASQNFKEAGIKLITLSNYTELIAVAKLQGYITNDGLHLLKKFKEDQVNWQQ</sequence>
<organism>
    <name type="scientific">Streptococcus pyogenes serotype M18 (strain MGAS8232)</name>
    <dbReference type="NCBI Taxonomy" id="186103"/>
    <lineage>
        <taxon>Bacteria</taxon>
        <taxon>Bacillati</taxon>
        <taxon>Bacillota</taxon>
        <taxon>Bacilli</taxon>
        <taxon>Lactobacillales</taxon>
        <taxon>Streptococcaceae</taxon>
        <taxon>Streptococcus</taxon>
    </lineage>
</organism>
<proteinExistence type="inferred from homology"/>
<feature type="chain" id="PRO_0000110756" description="Orotate phosphoribosyltransferase">
    <location>
        <begin position="1"/>
        <end position="209"/>
    </location>
</feature>
<feature type="binding site" evidence="1">
    <location>
        <position position="96"/>
    </location>
    <ligand>
        <name>5-phospho-alpha-D-ribose 1-diphosphate</name>
        <dbReference type="ChEBI" id="CHEBI:58017"/>
        <note>ligand shared between dimeric partners</note>
    </ligand>
</feature>
<feature type="binding site" evidence="1">
    <location>
        <position position="100"/>
    </location>
    <ligand>
        <name>5-phospho-alpha-D-ribose 1-diphosphate</name>
        <dbReference type="ChEBI" id="CHEBI:58017"/>
        <note>ligand shared between dimeric partners</note>
    </ligand>
</feature>
<feature type="binding site" evidence="1">
    <location>
        <position position="102"/>
    </location>
    <ligand>
        <name>5-phospho-alpha-D-ribose 1-diphosphate</name>
        <dbReference type="ChEBI" id="CHEBI:58017"/>
        <note>ligand shared between dimeric partners</note>
    </ligand>
</feature>
<feature type="binding site" description="in other chain" evidence="1">
    <location>
        <begin position="122"/>
        <end position="130"/>
    </location>
    <ligand>
        <name>5-phospho-alpha-D-ribose 1-diphosphate</name>
        <dbReference type="ChEBI" id="CHEBI:58017"/>
        <note>ligand shared between dimeric partners</note>
    </ligand>
</feature>
<feature type="binding site" evidence="1">
    <location>
        <position position="126"/>
    </location>
    <ligand>
        <name>orotate</name>
        <dbReference type="ChEBI" id="CHEBI:30839"/>
    </ligand>
</feature>
<comment type="function">
    <text evidence="1">Catalyzes the transfer of a ribosyl phosphate group from 5-phosphoribose 1-diphosphate to orotate, leading to the formation of orotidine monophosphate (OMP).</text>
</comment>
<comment type="catalytic activity">
    <reaction evidence="1">
        <text>orotidine 5'-phosphate + diphosphate = orotate + 5-phospho-alpha-D-ribose 1-diphosphate</text>
        <dbReference type="Rhea" id="RHEA:10380"/>
        <dbReference type="ChEBI" id="CHEBI:30839"/>
        <dbReference type="ChEBI" id="CHEBI:33019"/>
        <dbReference type="ChEBI" id="CHEBI:57538"/>
        <dbReference type="ChEBI" id="CHEBI:58017"/>
        <dbReference type="EC" id="2.4.2.10"/>
    </reaction>
</comment>
<comment type="cofactor">
    <cofactor evidence="1">
        <name>Mg(2+)</name>
        <dbReference type="ChEBI" id="CHEBI:18420"/>
    </cofactor>
</comment>
<comment type="pathway">
    <text evidence="1">Pyrimidine metabolism; UMP biosynthesis via de novo pathway; UMP from orotate: step 1/2.</text>
</comment>
<comment type="subunit">
    <text evidence="1">Homodimer.</text>
</comment>
<comment type="similarity">
    <text evidence="1">Belongs to the purine/pyrimidine phosphoribosyltransferase family. PyrE subfamily.</text>
</comment>
<dbReference type="EC" id="2.4.2.10" evidence="1"/>
<dbReference type="EMBL" id="AE009949">
    <property type="protein sequence ID" value="AAL97601.1"/>
    <property type="molecule type" value="Genomic_DNA"/>
</dbReference>
<dbReference type="RefSeq" id="WP_002984920.1">
    <property type="nucleotide sequence ID" value="NC_003485.1"/>
</dbReference>
<dbReference type="SMR" id="P65920"/>
<dbReference type="GeneID" id="69900997"/>
<dbReference type="KEGG" id="spm:spyM18_0960"/>
<dbReference type="HOGENOM" id="CLU_074878_1_1_9"/>
<dbReference type="UniPathway" id="UPA00070">
    <property type="reaction ID" value="UER00119"/>
</dbReference>
<dbReference type="GO" id="GO:0000287">
    <property type="term" value="F:magnesium ion binding"/>
    <property type="evidence" value="ECO:0007669"/>
    <property type="project" value="UniProtKB-UniRule"/>
</dbReference>
<dbReference type="GO" id="GO:0004588">
    <property type="term" value="F:orotate phosphoribosyltransferase activity"/>
    <property type="evidence" value="ECO:0007669"/>
    <property type="project" value="UniProtKB-UniRule"/>
</dbReference>
<dbReference type="GO" id="GO:0044205">
    <property type="term" value="P:'de novo' UMP biosynthetic process"/>
    <property type="evidence" value="ECO:0007669"/>
    <property type="project" value="UniProtKB-UniRule"/>
</dbReference>
<dbReference type="GO" id="GO:0019856">
    <property type="term" value="P:pyrimidine nucleobase biosynthetic process"/>
    <property type="evidence" value="ECO:0007669"/>
    <property type="project" value="TreeGrafter"/>
</dbReference>
<dbReference type="CDD" id="cd06223">
    <property type="entry name" value="PRTases_typeI"/>
    <property type="match status" value="1"/>
</dbReference>
<dbReference type="Gene3D" id="3.40.50.2020">
    <property type="match status" value="1"/>
</dbReference>
<dbReference type="HAMAP" id="MF_01208">
    <property type="entry name" value="PyrE"/>
    <property type="match status" value="1"/>
</dbReference>
<dbReference type="InterPro" id="IPR023031">
    <property type="entry name" value="OPRT"/>
</dbReference>
<dbReference type="InterPro" id="IPR004467">
    <property type="entry name" value="Or_phspho_trans_dom"/>
</dbReference>
<dbReference type="InterPro" id="IPR000836">
    <property type="entry name" value="PRibTrfase_dom"/>
</dbReference>
<dbReference type="InterPro" id="IPR029057">
    <property type="entry name" value="PRTase-like"/>
</dbReference>
<dbReference type="NCBIfam" id="TIGR00336">
    <property type="entry name" value="pyrE"/>
    <property type="match status" value="1"/>
</dbReference>
<dbReference type="PANTHER" id="PTHR19278">
    <property type="entry name" value="OROTATE PHOSPHORIBOSYLTRANSFERASE"/>
    <property type="match status" value="1"/>
</dbReference>
<dbReference type="PANTHER" id="PTHR19278:SF9">
    <property type="entry name" value="URIDINE 5'-MONOPHOSPHATE SYNTHASE"/>
    <property type="match status" value="1"/>
</dbReference>
<dbReference type="Pfam" id="PF00156">
    <property type="entry name" value="Pribosyltran"/>
    <property type="match status" value="1"/>
</dbReference>
<dbReference type="SUPFAM" id="SSF53271">
    <property type="entry name" value="PRTase-like"/>
    <property type="match status" value="1"/>
</dbReference>
<dbReference type="PROSITE" id="PS00103">
    <property type="entry name" value="PUR_PYR_PR_TRANSFER"/>
    <property type="match status" value="1"/>
</dbReference>
<evidence type="ECO:0000255" key="1">
    <source>
        <dbReference type="HAMAP-Rule" id="MF_01208"/>
    </source>
</evidence>
<gene>
    <name evidence="1" type="primary">pyrE</name>
    <name type="ordered locus">spyM18_0960</name>
</gene>
<accession>P65920</accession>
<accession>P58857</accession>
<name>PYRE_STRP8</name>
<keyword id="KW-0328">Glycosyltransferase</keyword>
<keyword id="KW-0460">Magnesium</keyword>
<keyword id="KW-0665">Pyrimidine biosynthesis</keyword>
<keyword id="KW-0808">Transferase</keyword>
<reference key="1">
    <citation type="journal article" date="2002" name="Proc. Natl. Acad. Sci. U.S.A.">
        <title>Genome sequence and comparative microarray analysis of serotype M18 group A Streptococcus strains associated with acute rheumatic fever outbreaks.</title>
        <authorList>
            <person name="Smoot J.C."/>
            <person name="Barbian K.D."/>
            <person name="Van Gompel J.J."/>
            <person name="Smoot L.M."/>
            <person name="Chaussee M.S."/>
            <person name="Sylva G.L."/>
            <person name="Sturdevant D.E."/>
            <person name="Ricklefs S.M."/>
            <person name="Porcella S.F."/>
            <person name="Parkins L.D."/>
            <person name="Beres S.B."/>
            <person name="Campbell D.S."/>
            <person name="Smith T.M."/>
            <person name="Zhang Q."/>
            <person name="Kapur V."/>
            <person name="Daly J.A."/>
            <person name="Veasy L.G."/>
            <person name="Musser J.M."/>
        </authorList>
    </citation>
    <scope>NUCLEOTIDE SEQUENCE [LARGE SCALE GENOMIC DNA]</scope>
    <source>
        <strain>MGAS8232</strain>
    </source>
</reference>
<protein>
    <recommendedName>
        <fullName evidence="1">Orotate phosphoribosyltransferase</fullName>
        <shortName evidence="1">OPRT</shortName>
        <shortName evidence="1">OPRTase</shortName>
        <ecNumber evidence="1">2.4.2.10</ecNumber>
    </recommendedName>
</protein>